<gene>
    <name evidence="1" type="primary">rpoC1</name>
</gene>
<accession>P60288</accession>
<feature type="chain" id="PRO_0000067889" description="DNA-directed RNA polymerase subunit beta'">
    <location>
        <begin position="1"/>
        <end position="679"/>
    </location>
</feature>
<feature type="binding site" evidence="1">
    <location>
        <position position="69"/>
    </location>
    <ligand>
        <name>Zn(2+)</name>
        <dbReference type="ChEBI" id="CHEBI:29105"/>
    </ligand>
</feature>
<feature type="binding site" evidence="1">
    <location>
        <position position="71"/>
    </location>
    <ligand>
        <name>Zn(2+)</name>
        <dbReference type="ChEBI" id="CHEBI:29105"/>
    </ligand>
</feature>
<feature type="binding site" evidence="1">
    <location>
        <position position="84"/>
    </location>
    <ligand>
        <name>Zn(2+)</name>
        <dbReference type="ChEBI" id="CHEBI:29105"/>
    </ligand>
</feature>
<feature type="binding site" evidence="1">
    <location>
        <position position="87"/>
    </location>
    <ligand>
        <name>Zn(2+)</name>
        <dbReference type="ChEBI" id="CHEBI:29105"/>
    </ligand>
</feature>
<feature type="binding site" evidence="1">
    <location>
        <position position="486"/>
    </location>
    <ligand>
        <name>Mg(2+)</name>
        <dbReference type="ChEBI" id="CHEBI:18420"/>
    </ligand>
</feature>
<feature type="binding site" evidence="1">
    <location>
        <position position="488"/>
    </location>
    <ligand>
        <name>Mg(2+)</name>
        <dbReference type="ChEBI" id="CHEBI:18420"/>
    </ligand>
</feature>
<feature type="binding site" evidence="1">
    <location>
        <position position="490"/>
    </location>
    <ligand>
        <name>Mg(2+)</name>
        <dbReference type="ChEBI" id="CHEBI:18420"/>
    </ligand>
</feature>
<reference key="1">
    <citation type="journal article" date="2003" name="Nucleic Acids Res.">
        <title>Complete chloroplast DNA sequence of the moss Physcomitrella patens: evidence for the loss and relocation of rpoA from the chloroplast to the nucleus.</title>
        <authorList>
            <person name="Sugiura C."/>
            <person name="Kobayashi Y."/>
            <person name="Setsuyuki A."/>
            <person name="Sugita C."/>
            <person name="Sugita M."/>
        </authorList>
    </citation>
    <scope>NUCLEOTIDE SEQUENCE [LARGE SCALE GENOMIC DNA]</scope>
    <source>
        <strain>cv. Gransden 2004</strain>
    </source>
</reference>
<geneLocation type="chloroplast"/>
<sequence>MIHREKYHHLRIRLASPEQIRSWAERVLPNGEIVGQVTKPYTLHYKTHKPEKDGLFCERIFGPIKSGICACGKYQIIEKYSKFCEQCGVEFVESRVRRYRMGYIKLACPVTHVWYLKRLPSYIANLLAKPLKELESLVYCDLFLARPISKKPILLKLRGLFKYEDQSWREIFPRYFSSRGFEAFQNKEIATGGDAIKKQLSNLDLQGVLDYAYIEWKELVEQKSTGNEWEDRKIQRRKDLLVRRIKLAKQFLQTNIKPEWMVLSLLPVLPPELRPMIELGEGELITSDLNELYRRVIYRNNTLIDFLARSGSTPGGLVVCQIRLVQEAVDGLIDNGIRGQPMKDSHNRPYKSFSDVIEGKEGRFRENLLGKRVDYSGRSVIVVGPFLSLHQCGLPREMAIELFQAFVIRGLIGRHLAPNLRAAKSMIQNKEPIIWKILQEIMQGHPVLLNRAPTLHRLGIQAFQPILIKGRAIRLHPLVCGGFNADFDGDQMAVHIPLSLEAQAEARLLMFSHTNLLSPATGDPVSVPSQDMLLGLYILTIKNHQGIYGNKNHPYKQNNNKIFLNKTPYFSSYDDVIKAYNQKKVRLHSALWLWWGSKLRTITSINREKPIEVQYNSSGISFKIYEHYQLKKNKNEKNFSVYICTTVGRIIFNQQIEEAIQGTLKASLFRNQSLPAITI</sequence>
<comment type="function">
    <text evidence="1">DNA-dependent RNA polymerase catalyzes the transcription of DNA into RNA using the four ribonucleoside triphosphates as substrates.</text>
</comment>
<comment type="catalytic activity">
    <reaction evidence="1">
        <text>RNA(n) + a ribonucleoside 5'-triphosphate = RNA(n+1) + diphosphate</text>
        <dbReference type="Rhea" id="RHEA:21248"/>
        <dbReference type="Rhea" id="RHEA-COMP:14527"/>
        <dbReference type="Rhea" id="RHEA-COMP:17342"/>
        <dbReference type="ChEBI" id="CHEBI:33019"/>
        <dbReference type="ChEBI" id="CHEBI:61557"/>
        <dbReference type="ChEBI" id="CHEBI:140395"/>
        <dbReference type="EC" id="2.7.7.6"/>
    </reaction>
</comment>
<comment type="cofactor">
    <cofactor evidence="1">
        <name>Mg(2+)</name>
        <dbReference type="ChEBI" id="CHEBI:18420"/>
    </cofactor>
    <text evidence="1">Binds 1 Mg(2+) ion per subunit.</text>
</comment>
<comment type="cofactor">
    <cofactor evidence="1">
        <name>Zn(2+)</name>
        <dbReference type="ChEBI" id="CHEBI:29105"/>
    </cofactor>
    <text evidence="1">Binds 1 Zn(2+) ion per subunit.</text>
</comment>
<comment type="subunit">
    <text evidence="1">In plastids the minimal PEP RNA polymerase catalytic core is composed of four subunits: alpha, beta, beta', and beta''. When a (nuclear-encoded) sigma factor is associated with the core the holoenzyme is formed, which can initiate transcription.</text>
</comment>
<comment type="subcellular location">
    <subcellularLocation>
        <location evidence="1">Plastid</location>
        <location evidence="1">Chloroplast</location>
    </subcellularLocation>
</comment>
<comment type="similarity">
    <text evidence="1">Belongs to the RNA polymerase beta' chain family. RpoC1 subfamily.</text>
</comment>
<organism>
    <name type="scientific">Physcomitrium patens</name>
    <name type="common">Spreading-leaved earth moss</name>
    <name type="synonym">Physcomitrella patens</name>
    <dbReference type="NCBI Taxonomy" id="3218"/>
    <lineage>
        <taxon>Eukaryota</taxon>
        <taxon>Viridiplantae</taxon>
        <taxon>Streptophyta</taxon>
        <taxon>Embryophyta</taxon>
        <taxon>Bryophyta</taxon>
        <taxon>Bryophytina</taxon>
        <taxon>Bryopsida</taxon>
        <taxon>Funariidae</taxon>
        <taxon>Funariales</taxon>
        <taxon>Funariaceae</taxon>
        <taxon>Physcomitrium</taxon>
    </lineage>
</organism>
<dbReference type="EC" id="2.7.7.6" evidence="1"/>
<dbReference type="EMBL" id="AP005672">
    <property type="protein sequence ID" value="BAC85072.1"/>
    <property type="molecule type" value="Genomic_DNA"/>
</dbReference>
<dbReference type="RefSeq" id="NP_904222.1">
    <property type="nucleotide sequence ID" value="NC_005087.2"/>
</dbReference>
<dbReference type="RefSeq" id="YP_009477552.1">
    <property type="nucleotide sequence ID" value="NC_037465.1"/>
</dbReference>
<dbReference type="SMR" id="P60288"/>
<dbReference type="FunCoup" id="P60288">
    <property type="interactions" value="91"/>
</dbReference>
<dbReference type="STRING" id="3218.P60288"/>
<dbReference type="PaxDb" id="3218-PP1S997_1V6.1"/>
<dbReference type="GeneID" id="2546751"/>
<dbReference type="GeneID" id="36487186"/>
<dbReference type="KEGG" id="ppp:2546751"/>
<dbReference type="eggNOG" id="ENOG502QPYA">
    <property type="taxonomic scope" value="Eukaryota"/>
</dbReference>
<dbReference type="HOGENOM" id="CLU_101590_0_0_1"/>
<dbReference type="InParanoid" id="P60288"/>
<dbReference type="OrthoDB" id="1862828at2759"/>
<dbReference type="Proteomes" id="UP000006727">
    <property type="component" value="Chloroplast"/>
</dbReference>
<dbReference type="GO" id="GO:0009507">
    <property type="term" value="C:chloroplast"/>
    <property type="evidence" value="ECO:0007669"/>
    <property type="project" value="UniProtKB-SubCell"/>
</dbReference>
<dbReference type="GO" id="GO:0000428">
    <property type="term" value="C:DNA-directed RNA polymerase complex"/>
    <property type="evidence" value="ECO:0007669"/>
    <property type="project" value="UniProtKB-KW"/>
</dbReference>
<dbReference type="GO" id="GO:0005739">
    <property type="term" value="C:mitochondrion"/>
    <property type="evidence" value="ECO:0007669"/>
    <property type="project" value="GOC"/>
</dbReference>
<dbReference type="GO" id="GO:0003677">
    <property type="term" value="F:DNA binding"/>
    <property type="evidence" value="ECO:0007669"/>
    <property type="project" value="UniProtKB-UniRule"/>
</dbReference>
<dbReference type="GO" id="GO:0003899">
    <property type="term" value="F:DNA-directed RNA polymerase activity"/>
    <property type="evidence" value="ECO:0007669"/>
    <property type="project" value="UniProtKB-UniRule"/>
</dbReference>
<dbReference type="GO" id="GO:0000287">
    <property type="term" value="F:magnesium ion binding"/>
    <property type="evidence" value="ECO:0007669"/>
    <property type="project" value="UniProtKB-UniRule"/>
</dbReference>
<dbReference type="GO" id="GO:0008270">
    <property type="term" value="F:zinc ion binding"/>
    <property type="evidence" value="ECO:0007669"/>
    <property type="project" value="UniProtKB-UniRule"/>
</dbReference>
<dbReference type="GO" id="GO:0006351">
    <property type="term" value="P:DNA-templated transcription"/>
    <property type="evidence" value="ECO:0007669"/>
    <property type="project" value="UniProtKB-UniRule"/>
</dbReference>
<dbReference type="Gene3D" id="1.10.40.90">
    <property type="match status" value="1"/>
</dbReference>
<dbReference type="Gene3D" id="2.40.40.20">
    <property type="match status" value="1"/>
</dbReference>
<dbReference type="Gene3D" id="4.10.860.120">
    <property type="entry name" value="RNA polymerase II, clamp domain"/>
    <property type="match status" value="1"/>
</dbReference>
<dbReference type="Gene3D" id="1.10.274.100">
    <property type="entry name" value="RNA polymerase Rpb1, domain 3"/>
    <property type="match status" value="1"/>
</dbReference>
<dbReference type="HAMAP" id="MF_01323">
    <property type="entry name" value="RNApol_bact_RpoC1"/>
    <property type="match status" value="1"/>
</dbReference>
<dbReference type="InterPro" id="IPR045867">
    <property type="entry name" value="DNA-dir_RpoC_beta_prime"/>
</dbReference>
<dbReference type="InterPro" id="IPR000722">
    <property type="entry name" value="RNA_pol_asu"/>
</dbReference>
<dbReference type="InterPro" id="IPR006592">
    <property type="entry name" value="RNA_pol_N"/>
</dbReference>
<dbReference type="InterPro" id="IPR007080">
    <property type="entry name" value="RNA_pol_Rpb1_1"/>
</dbReference>
<dbReference type="InterPro" id="IPR007066">
    <property type="entry name" value="RNA_pol_Rpb1_3"/>
</dbReference>
<dbReference type="InterPro" id="IPR042102">
    <property type="entry name" value="RNA_pol_Rpb1_3_sf"/>
</dbReference>
<dbReference type="InterPro" id="IPR044893">
    <property type="entry name" value="RNA_pol_Rpb1_clamp_domain"/>
</dbReference>
<dbReference type="InterPro" id="IPR034678">
    <property type="entry name" value="RNApol_RpoC1"/>
</dbReference>
<dbReference type="PANTHER" id="PTHR19376">
    <property type="entry name" value="DNA-DIRECTED RNA POLYMERASE"/>
    <property type="match status" value="1"/>
</dbReference>
<dbReference type="PANTHER" id="PTHR19376:SF54">
    <property type="entry name" value="DNA-DIRECTED RNA POLYMERASE SUBUNIT BETA"/>
    <property type="match status" value="1"/>
</dbReference>
<dbReference type="Pfam" id="PF04997">
    <property type="entry name" value="RNA_pol_Rpb1_1"/>
    <property type="match status" value="1"/>
</dbReference>
<dbReference type="Pfam" id="PF00623">
    <property type="entry name" value="RNA_pol_Rpb1_2"/>
    <property type="match status" value="2"/>
</dbReference>
<dbReference type="Pfam" id="PF04983">
    <property type="entry name" value="RNA_pol_Rpb1_3"/>
    <property type="match status" value="1"/>
</dbReference>
<dbReference type="SMART" id="SM00663">
    <property type="entry name" value="RPOLA_N"/>
    <property type="match status" value="1"/>
</dbReference>
<dbReference type="SUPFAM" id="SSF64484">
    <property type="entry name" value="beta and beta-prime subunits of DNA dependent RNA-polymerase"/>
    <property type="match status" value="1"/>
</dbReference>
<protein>
    <recommendedName>
        <fullName evidence="1">DNA-directed RNA polymerase subunit beta'</fullName>
        <ecNumber evidence="1">2.7.7.6</ecNumber>
    </recommendedName>
    <alternativeName>
        <fullName evidence="1">PEP</fullName>
    </alternativeName>
    <alternativeName>
        <fullName evidence="1">Plastid-encoded RNA polymerase subunit beta'</fullName>
        <shortName evidence="1">RNA polymerase subunit beta'</shortName>
    </alternativeName>
</protein>
<keyword id="KW-0150">Chloroplast</keyword>
<keyword id="KW-0240">DNA-directed RNA polymerase</keyword>
<keyword id="KW-0460">Magnesium</keyword>
<keyword id="KW-0479">Metal-binding</keyword>
<keyword id="KW-0548">Nucleotidyltransferase</keyword>
<keyword id="KW-0934">Plastid</keyword>
<keyword id="KW-1185">Reference proteome</keyword>
<keyword id="KW-0804">Transcription</keyword>
<keyword id="KW-0808">Transferase</keyword>
<keyword id="KW-0862">Zinc</keyword>
<name>RPOC1_PHYPA</name>
<proteinExistence type="inferred from homology"/>
<evidence type="ECO:0000255" key="1">
    <source>
        <dbReference type="HAMAP-Rule" id="MF_01323"/>
    </source>
</evidence>